<keyword id="KW-0012">Acyltransferase</keyword>
<keyword id="KW-0325">Glycoprotein</keyword>
<keyword id="KW-0333">Golgi apparatus</keyword>
<keyword id="KW-0472">Membrane</keyword>
<keyword id="KW-1185">Reference proteome</keyword>
<keyword id="KW-0808">Transferase</keyword>
<keyword id="KW-0812">Transmembrane</keyword>
<keyword id="KW-1133">Transmembrane helix</keyword>
<accession>Q1LW89</accession>
<accession>Q1JQ49</accession>
<accession>Q4V8Z8</accession>
<organism>
    <name type="scientific">Danio rerio</name>
    <name type="common">Zebrafish</name>
    <name type="synonym">Brachydanio rerio</name>
    <dbReference type="NCBI Taxonomy" id="7955"/>
    <lineage>
        <taxon>Eukaryota</taxon>
        <taxon>Metazoa</taxon>
        <taxon>Chordata</taxon>
        <taxon>Craniata</taxon>
        <taxon>Vertebrata</taxon>
        <taxon>Euteleostomi</taxon>
        <taxon>Actinopterygii</taxon>
        <taxon>Neopterygii</taxon>
        <taxon>Teleostei</taxon>
        <taxon>Ostariophysi</taxon>
        <taxon>Cypriniformes</taxon>
        <taxon>Danionidae</taxon>
        <taxon>Danioninae</taxon>
        <taxon>Danio</taxon>
    </lineage>
</organism>
<evidence type="ECO:0000250" key="1">
    <source>
        <dbReference type="UniProtKB" id="Q96PB1"/>
    </source>
</evidence>
<evidence type="ECO:0000255" key="2"/>
<evidence type="ECO:0000255" key="3">
    <source>
        <dbReference type="PROSITE-ProRule" id="PRU00498"/>
    </source>
</evidence>
<evidence type="ECO:0000256" key="4">
    <source>
        <dbReference type="SAM" id="MobiDB-lite"/>
    </source>
</evidence>
<evidence type="ECO:0000303" key="5">
    <source>
    </source>
</evidence>
<evidence type="ECO:0000303" key="6">
    <source ref="2"/>
</evidence>
<evidence type="ECO:0000305" key="7"/>
<gene>
    <name evidence="1" type="primary">casd1</name>
    <name evidence="5" type="ORF">si:dkey-104m9.2</name>
    <name evidence="6" type="ORF">zgc:136291</name>
</gene>
<name>CASD1_DANRE</name>
<sequence length="781" mass="88736">MAVLAYNLGKREINQYFSIKNAKLLAAAAVVLLTVFHAASRHYGSSDTCDWLLSSGRFLGDNVWQPYGCMLHKYKSTEAKFCLREKRIAFVGDSRIRQLFYSFIKMMNPEVKEVGNKHENIPFVDGDSTVNFLWYAEVNNSLKEQLMLWTEGSASKPHVIIIGAATWSIKLHNGKSEALFQYKANLTAIADTLEKLAEHSEVYWVLQDPVYEDVLSESRKMITNEQINLYNEAAVSTLNTSKKKVKFLEASRQAAMETISQSVDGLHLPESTRDVGAMVLMNSMCNKILKPIDGSCCQSAPPLSVLQKLAAAVLLVSVVCFVLLGFSSHRKSRPAPDVESGEEKKHPAAVGQLNPKGPLLAIGKMSLIMLYFYLCDRADIFMKEQKFYTHSAFFIPLIYIFVLGVFYSENSKETKLLNREQTDEWKGWMQLVILIYHISGASAFIPVYMHVRVLVAAYLFQTGYGHFSFFWLKGDFGLYRVCQVLFRLNFLVVVLCLVMDRPYQFYYFVPLVTFWFAVIYATMALWPQILQKQANGSAFWNLALLLKLLGLLLFIGFFAYSQELFEGIFSVWPLSKLFELQGSIHEWWFRWKLDRFAVVNGMLFAFIYLLLQKYQLLSEGKGEPLFSNKISNCLLFVSVVSFMTYSIWASGCKNKSECNEMHPYISVILAFILIRNIPGYARSLYSSFFAWFGKISLELFICQYHIWLAADTKGILVLIPGNPTLNIIVSTFIFVCVAHEISQITNDLAQVAIPKESGPLLKRLLGAGVFLVLVLTLSQKD</sequence>
<protein>
    <recommendedName>
        <fullName evidence="1">N-acetylneuraminate (7)9-O-acetyltransferase</fullName>
        <ecNumber evidence="1">2.3.1.45</ecNumber>
    </recommendedName>
    <alternativeName>
        <fullName evidence="1">CAS1 domain-containing protein 1</fullName>
    </alternativeName>
    <alternativeName>
        <fullName evidence="1">CAS1 protein</fullName>
        <shortName evidence="1">Cas1p</shortName>
    </alternativeName>
    <alternativeName>
        <fullName evidence="1">Sialate O-acetyltransferase</fullName>
        <shortName evidence="1">SOAT</shortName>
    </alternativeName>
</protein>
<reference key="1">
    <citation type="journal article" date="2013" name="Nature">
        <title>The zebrafish reference genome sequence and its relationship to the human genome.</title>
        <authorList>
            <person name="Howe K."/>
            <person name="Clark M.D."/>
            <person name="Torroja C.F."/>
            <person name="Torrance J."/>
            <person name="Berthelot C."/>
            <person name="Muffato M."/>
            <person name="Collins J.E."/>
            <person name="Humphray S."/>
            <person name="McLaren K."/>
            <person name="Matthews L."/>
            <person name="McLaren S."/>
            <person name="Sealy I."/>
            <person name="Caccamo M."/>
            <person name="Churcher C."/>
            <person name="Scott C."/>
            <person name="Barrett J.C."/>
            <person name="Koch R."/>
            <person name="Rauch G.J."/>
            <person name="White S."/>
            <person name="Chow W."/>
            <person name="Kilian B."/>
            <person name="Quintais L.T."/>
            <person name="Guerra-Assuncao J.A."/>
            <person name="Zhou Y."/>
            <person name="Gu Y."/>
            <person name="Yen J."/>
            <person name="Vogel J.H."/>
            <person name="Eyre T."/>
            <person name="Redmond S."/>
            <person name="Banerjee R."/>
            <person name="Chi J."/>
            <person name="Fu B."/>
            <person name="Langley E."/>
            <person name="Maguire S.F."/>
            <person name="Laird G.K."/>
            <person name="Lloyd D."/>
            <person name="Kenyon E."/>
            <person name="Donaldson S."/>
            <person name="Sehra H."/>
            <person name="Almeida-King J."/>
            <person name="Loveland J."/>
            <person name="Trevanion S."/>
            <person name="Jones M."/>
            <person name="Quail M."/>
            <person name="Willey D."/>
            <person name="Hunt A."/>
            <person name="Burton J."/>
            <person name="Sims S."/>
            <person name="McLay K."/>
            <person name="Plumb B."/>
            <person name="Davis J."/>
            <person name="Clee C."/>
            <person name="Oliver K."/>
            <person name="Clark R."/>
            <person name="Riddle C."/>
            <person name="Elliot D."/>
            <person name="Threadgold G."/>
            <person name="Harden G."/>
            <person name="Ware D."/>
            <person name="Begum S."/>
            <person name="Mortimore B."/>
            <person name="Kerry G."/>
            <person name="Heath P."/>
            <person name="Phillimore B."/>
            <person name="Tracey A."/>
            <person name="Corby N."/>
            <person name="Dunn M."/>
            <person name="Johnson C."/>
            <person name="Wood J."/>
            <person name="Clark S."/>
            <person name="Pelan S."/>
            <person name="Griffiths G."/>
            <person name="Smith M."/>
            <person name="Glithero R."/>
            <person name="Howden P."/>
            <person name="Barker N."/>
            <person name="Lloyd C."/>
            <person name="Stevens C."/>
            <person name="Harley J."/>
            <person name="Holt K."/>
            <person name="Panagiotidis G."/>
            <person name="Lovell J."/>
            <person name="Beasley H."/>
            <person name="Henderson C."/>
            <person name="Gordon D."/>
            <person name="Auger K."/>
            <person name="Wright D."/>
            <person name="Collins J."/>
            <person name="Raisen C."/>
            <person name="Dyer L."/>
            <person name="Leung K."/>
            <person name="Robertson L."/>
            <person name="Ambridge K."/>
            <person name="Leongamornlert D."/>
            <person name="McGuire S."/>
            <person name="Gilderthorp R."/>
            <person name="Griffiths C."/>
            <person name="Manthravadi D."/>
            <person name="Nichol S."/>
            <person name="Barker G."/>
            <person name="Whitehead S."/>
            <person name="Kay M."/>
            <person name="Brown J."/>
            <person name="Murnane C."/>
            <person name="Gray E."/>
            <person name="Humphries M."/>
            <person name="Sycamore N."/>
            <person name="Barker D."/>
            <person name="Saunders D."/>
            <person name="Wallis J."/>
            <person name="Babbage A."/>
            <person name="Hammond S."/>
            <person name="Mashreghi-Mohammadi M."/>
            <person name="Barr L."/>
            <person name="Martin S."/>
            <person name="Wray P."/>
            <person name="Ellington A."/>
            <person name="Matthews N."/>
            <person name="Ellwood M."/>
            <person name="Woodmansey R."/>
            <person name="Clark G."/>
            <person name="Cooper J."/>
            <person name="Tromans A."/>
            <person name="Grafham D."/>
            <person name="Skuce C."/>
            <person name="Pandian R."/>
            <person name="Andrews R."/>
            <person name="Harrison E."/>
            <person name="Kimberley A."/>
            <person name="Garnett J."/>
            <person name="Fosker N."/>
            <person name="Hall R."/>
            <person name="Garner P."/>
            <person name="Kelly D."/>
            <person name="Bird C."/>
            <person name="Palmer S."/>
            <person name="Gehring I."/>
            <person name="Berger A."/>
            <person name="Dooley C.M."/>
            <person name="Ersan-Urun Z."/>
            <person name="Eser C."/>
            <person name="Geiger H."/>
            <person name="Geisler M."/>
            <person name="Karotki L."/>
            <person name="Kirn A."/>
            <person name="Konantz J."/>
            <person name="Konantz M."/>
            <person name="Oberlander M."/>
            <person name="Rudolph-Geiger S."/>
            <person name="Teucke M."/>
            <person name="Lanz C."/>
            <person name="Raddatz G."/>
            <person name="Osoegawa K."/>
            <person name="Zhu B."/>
            <person name="Rapp A."/>
            <person name="Widaa S."/>
            <person name="Langford C."/>
            <person name="Yang F."/>
            <person name="Schuster S.C."/>
            <person name="Carter N.P."/>
            <person name="Harrow J."/>
            <person name="Ning Z."/>
            <person name="Herrero J."/>
            <person name="Searle S.M."/>
            <person name="Enright A."/>
            <person name="Geisler R."/>
            <person name="Plasterk R.H."/>
            <person name="Lee C."/>
            <person name="Westerfield M."/>
            <person name="de Jong P.J."/>
            <person name="Zon L.I."/>
            <person name="Postlethwait J.H."/>
            <person name="Nusslein-Volhard C."/>
            <person name="Hubbard T.J."/>
            <person name="Roest Crollius H."/>
            <person name="Rogers J."/>
            <person name="Stemple D.L."/>
        </authorList>
    </citation>
    <scope>NUCLEOTIDE SEQUENCE [LARGE SCALE GENOMIC DNA]</scope>
    <source>
        <strain>Tuebingen</strain>
    </source>
</reference>
<reference key="2">
    <citation type="submission" date="2006-05" db="EMBL/GenBank/DDBJ databases">
        <authorList>
            <consortium name="NIH - Zebrafish Gene Collection (ZGC) project"/>
        </authorList>
    </citation>
    <scope>NUCLEOTIDE SEQUENCE [LARGE SCALE MRNA]</scope>
    <source>
        <strain>SJD</strain>
        <tissue>Embryo</tissue>
    </source>
</reference>
<dbReference type="EC" id="2.3.1.45" evidence="1"/>
<dbReference type="EMBL" id="BX640469">
    <property type="protein sequence ID" value="CAK05066.1"/>
    <property type="status" value="ALT_SEQ"/>
    <property type="molecule type" value="Genomic_DNA"/>
</dbReference>
<dbReference type="EMBL" id="BC097133">
    <property type="protein sequence ID" value="AAH97133.1"/>
    <property type="status" value="ALT_SEQ"/>
    <property type="molecule type" value="mRNA"/>
</dbReference>
<dbReference type="EMBL" id="BC116484">
    <property type="protein sequence ID" value="AAI16485.1"/>
    <property type="status" value="ALT_SEQ"/>
    <property type="molecule type" value="mRNA"/>
</dbReference>
<dbReference type="SMR" id="Q1LW89"/>
<dbReference type="FunCoup" id="Q1LW89">
    <property type="interactions" value="861"/>
</dbReference>
<dbReference type="STRING" id="7955.ENSDARP00000114886"/>
<dbReference type="GlyCosmos" id="Q1LW89">
    <property type="glycosylation" value="4 sites, No reported glycans"/>
</dbReference>
<dbReference type="PaxDb" id="7955-ENSDARP00000114886"/>
<dbReference type="AGR" id="ZFIN:ZDB-GENE-060503-329"/>
<dbReference type="ZFIN" id="ZDB-GENE-060503-329">
    <property type="gene designation" value="casd1"/>
</dbReference>
<dbReference type="eggNOG" id="KOG1699">
    <property type="taxonomic scope" value="Eukaryota"/>
</dbReference>
<dbReference type="HOGENOM" id="CLU_008003_1_0_1"/>
<dbReference type="InParanoid" id="Q1LW89"/>
<dbReference type="PhylomeDB" id="Q1LW89"/>
<dbReference type="TreeFam" id="TF324898"/>
<dbReference type="PRO" id="PR:Q1LW89"/>
<dbReference type="Proteomes" id="UP000000437">
    <property type="component" value="Unplaced"/>
</dbReference>
<dbReference type="GO" id="GO:0000139">
    <property type="term" value="C:Golgi membrane"/>
    <property type="evidence" value="ECO:0000250"/>
    <property type="project" value="UniProtKB"/>
</dbReference>
<dbReference type="GO" id="GO:0047186">
    <property type="term" value="F:N-acetylneuraminate 9-O-acetyltransferase activity"/>
    <property type="evidence" value="ECO:0000250"/>
    <property type="project" value="UniProtKB"/>
</dbReference>
<dbReference type="GO" id="GO:0005975">
    <property type="term" value="P:carbohydrate metabolic process"/>
    <property type="evidence" value="ECO:0000250"/>
    <property type="project" value="UniProtKB"/>
</dbReference>
<dbReference type="FunFam" id="3.40.50.1110:FF:000050">
    <property type="entry name" value="N-acetylneuraminate 9-O-acetyltransferase"/>
    <property type="match status" value="1"/>
</dbReference>
<dbReference type="Gene3D" id="3.40.50.1110">
    <property type="entry name" value="SGNH hydrolase"/>
    <property type="match status" value="1"/>
</dbReference>
<dbReference type="InterPro" id="IPR012419">
    <property type="entry name" value="Cas1_AcylTrans_dom"/>
</dbReference>
<dbReference type="InterPro" id="IPR057106">
    <property type="entry name" value="NXPE4_C"/>
</dbReference>
<dbReference type="InterPro" id="IPR036514">
    <property type="entry name" value="SGNH_hydro_sf"/>
</dbReference>
<dbReference type="PANTHER" id="PTHR13533">
    <property type="entry name" value="N-ACETYLNEURAMINATE 9-O-ACETYLTRANSFERASE"/>
    <property type="match status" value="1"/>
</dbReference>
<dbReference type="PANTHER" id="PTHR13533:SF1">
    <property type="entry name" value="N-ACETYLNEURAMINATE 9-O-ACETYLTRANSFERASE"/>
    <property type="match status" value="1"/>
</dbReference>
<dbReference type="Pfam" id="PF07779">
    <property type="entry name" value="Cas1_AcylT"/>
    <property type="match status" value="1"/>
</dbReference>
<dbReference type="Pfam" id="PF24536">
    <property type="entry name" value="NXPE4_C"/>
    <property type="match status" value="1"/>
</dbReference>
<dbReference type="SUPFAM" id="SSF52266">
    <property type="entry name" value="SGNH hydrolase"/>
    <property type="match status" value="1"/>
</dbReference>
<feature type="chain" id="PRO_0000307232" description="N-acetylneuraminate (7)9-O-acetyltransferase">
    <location>
        <begin position="1"/>
        <end position="781"/>
    </location>
</feature>
<feature type="topological domain" description="Cytoplasmic" evidence="7">
    <location>
        <begin position="1"/>
        <end position="15"/>
    </location>
</feature>
<feature type="transmembrane region" description="Helical" evidence="2">
    <location>
        <begin position="16"/>
        <end position="36"/>
    </location>
</feature>
<feature type="topological domain" description="Lumenal" evidence="1">
    <location>
        <begin position="37"/>
        <end position="308"/>
    </location>
</feature>
<feature type="transmembrane region" description="Helical" evidence="2">
    <location>
        <begin position="309"/>
        <end position="329"/>
    </location>
</feature>
<feature type="topological domain" description="Cytoplasmic" evidence="7">
    <location>
        <begin position="330"/>
        <end position="354"/>
    </location>
</feature>
<feature type="transmembrane region" description="Helical" evidence="2">
    <location>
        <begin position="355"/>
        <end position="375"/>
    </location>
</feature>
<feature type="topological domain" description="Lumenal" evidence="7">
    <location>
        <begin position="376"/>
        <end position="386"/>
    </location>
</feature>
<feature type="transmembrane region" description="Helical" evidence="2">
    <location>
        <begin position="387"/>
        <end position="407"/>
    </location>
</feature>
<feature type="topological domain" description="Cytoplasmic" evidence="7">
    <location>
        <begin position="408"/>
        <end position="430"/>
    </location>
</feature>
<feature type="transmembrane region" description="Helical" evidence="2">
    <location>
        <begin position="431"/>
        <end position="451"/>
    </location>
</feature>
<feature type="topological domain" description="Lumenal" evidence="7">
    <location>
        <position position="452"/>
    </location>
</feature>
<feature type="transmembrane region" description="Helical" evidence="2">
    <location>
        <begin position="453"/>
        <end position="473"/>
    </location>
</feature>
<feature type="topological domain" description="Cytoplasmic" evidence="7">
    <location>
        <begin position="474"/>
        <end position="477"/>
    </location>
</feature>
<feature type="transmembrane region" description="Helical" evidence="2">
    <location>
        <begin position="478"/>
        <end position="498"/>
    </location>
</feature>
<feature type="topological domain" description="Lumenal" evidence="7">
    <location>
        <begin position="499"/>
        <end position="504"/>
    </location>
</feature>
<feature type="transmembrane region" description="Helical" evidence="2">
    <location>
        <begin position="505"/>
        <end position="525"/>
    </location>
</feature>
<feature type="topological domain" description="Cytoplasmic" evidence="7">
    <location>
        <begin position="526"/>
        <end position="537"/>
    </location>
</feature>
<feature type="transmembrane region" description="Helical" evidence="2">
    <location>
        <begin position="538"/>
        <end position="558"/>
    </location>
</feature>
<feature type="topological domain" description="Lumenal" evidence="7">
    <location>
        <begin position="559"/>
        <end position="595"/>
    </location>
</feature>
<feature type="transmembrane region" description="Helical" evidence="2">
    <location>
        <begin position="596"/>
        <end position="616"/>
    </location>
</feature>
<feature type="topological domain" description="Cytoplasmic" evidence="7">
    <location>
        <begin position="617"/>
        <end position="629"/>
    </location>
</feature>
<feature type="transmembrane region" description="Helical" evidence="2">
    <location>
        <begin position="630"/>
        <end position="650"/>
    </location>
</feature>
<feature type="topological domain" description="Lumenal" evidence="7">
    <location>
        <begin position="651"/>
        <end position="660"/>
    </location>
</feature>
<feature type="transmembrane region" description="Helical" evidence="2">
    <location>
        <begin position="661"/>
        <end position="681"/>
    </location>
</feature>
<feature type="topological domain" description="Cytoplasmic" evidence="7">
    <location>
        <begin position="682"/>
        <end position="687"/>
    </location>
</feature>
<feature type="transmembrane region" description="Helical" evidence="2">
    <location>
        <begin position="688"/>
        <end position="708"/>
    </location>
</feature>
<feature type="topological domain" description="Lumenal" evidence="7">
    <location>
        <begin position="709"/>
        <end position="714"/>
    </location>
</feature>
<feature type="transmembrane region" description="Helical" evidence="2">
    <location>
        <begin position="715"/>
        <end position="735"/>
    </location>
</feature>
<feature type="topological domain" description="Cytoplasmic" evidence="7">
    <location>
        <begin position="736"/>
        <end position="756"/>
    </location>
</feature>
<feature type="transmembrane region" description="Helical" evidence="2">
    <location>
        <begin position="757"/>
        <end position="777"/>
    </location>
</feature>
<feature type="topological domain" description="Lumenal" evidence="7">
    <location>
        <begin position="778"/>
        <end position="781"/>
    </location>
</feature>
<feature type="region of interest" description="Disordered" evidence="4">
    <location>
        <begin position="330"/>
        <end position="350"/>
    </location>
</feature>
<feature type="active site" description="Acyl-ester intermediate" evidence="1">
    <location>
        <position position="94"/>
    </location>
</feature>
<feature type="active site" evidence="1">
    <location>
        <position position="264"/>
    </location>
</feature>
<feature type="active site" evidence="1">
    <location>
        <position position="267"/>
    </location>
</feature>
<feature type="glycosylation site" description="N-linked (GlcNAc...) asparagine" evidence="3">
    <location>
        <position position="139"/>
    </location>
</feature>
<feature type="glycosylation site" description="N-linked (GlcNAc...) asparagine" evidence="3">
    <location>
        <position position="185"/>
    </location>
</feature>
<feature type="glycosylation site" description="N-linked (GlcNAc...) asparagine" evidence="3">
    <location>
        <position position="239"/>
    </location>
</feature>
<feature type="glycosylation site" description="N-linked (GlcNAc...) asparagine" evidence="3">
    <location>
        <position position="654"/>
    </location>
</feature>
<comment type="function">
    <text evidence="1">Key enzyme in the biosynthesis of O-acetylated (O-Ac) sialoglycans such as gangliosides O-AcGD3 and O-AcGD2, which affect various processes such as cell-cell interactions, host-pathogen recognition. Catalyzes the transfer of an acetyl group from a donor, the acetyl-coenzyme-A molecule (acetyl-CoA), to the C7/8/9 OH-position of a sialic acid residue. The primary site of O-acetyl group transfer on sialic acid seems to depend on cell type and can be C7, from which the O-acetyl group could subsequently migrate to the C8 and then to the C9 position, or at C9 with possibility of migrating to the C8 and then to the C7 position. Together with ST8SIA1 (GD3 synthase) it increases the levels of ganglioside Ac-O-7-GD3. Can transfer the acetyl group from acetyl-CoA to free sialate (N-acetylneuraminate, Neu5Ac) in vitro, but has preferred substrate specificity for CMP-activated sialate (CMP-Neu5Ac), resulting in the formation of 9-O-acetylated CMP-Neu5Ac (CMP-Neu5,9Ac2). CMP-Neu5,9Ac2 may be used by sialyltransferases as a sialate donor for glycoconjugate acceptors such as ganglioside GD3. O-acetylation at position C9 of ganglioside GD3 can counteract the pro-apoptotic effects of the ganglioside GD3 in tumor cells.</text>
</comment>
<comment type="catalytic activity">
    <reaction evidence="1">
        <text>CMP-N-acetyl-beta-neuraminate + acetyl-CoA = CMP-N-acetyl-9-O-acetyl-beta-neuraminate + CoA</text>
        <dbReference type="Rhea" id="RHEA:81827"/>
        <dbReference type="ChEBI" id="CHEBI:57287"/>
        <dbReference type="ChEBI" id="CHEBI:57288"/>
        <dbReference type="ChEBI" id="CHEBI:57812"/>
        <dbReference type="ChEBI" id="CHEBI:229947"/>
        <dbReference type="EC" id="2.3.1.45"/>
    </reaction>
    <physiologicalReaction direction="left-to-right" evidence="1">
        <dbReference type="Rhea" id="RHEA:81828"/>
    </physiologicalReaction>
</comment>
<comment type="catalytic activity">
    <reaction evidence="1">
        <text>a ganglioside GD3 (d18:1(4E)) + acetyl-CoA = a ganglioside Ac-O-7-GD3(d18:1(4E)) + CoA</text>
        <dbReference type="Rhea" id="RHEA:79499"/>
        <dbReference type="ChEBI" id="CHEBI:57287"/>
        <dbReference type="ChEBI" id="CHEBI:57288"/>
        <dbReference type="ChEBI" id="CHEBI:78436"/>
        <dbReference type="ChEBI" id="CHEBI:228242"/>
    </reaction>
    <physiologicalReaction direction="left-to-right" evidence="1">
        <dbReference type="Rhea" id="RHEA:79500"/>
    </physiologicalReaction>
</comment>
<comment type="catalytic activity">
    <reaction evidence="1">
        <text>CMP-N-acetyl-beta-neuraminate + acetyl-CoA = CMP-N-acetyl-7-O-acetyl-beta-neuraminate + CoA</text>
        <dbReference type="Rhea" id="RHEA:79555"/>
        <dbReference type="ChEBI" id="CHEBI:57287"/>
        <dbReference type="ChEBI" id="CHEBI:57288"/>
        <dbReference type="ChEBI" id="CHEBI:57812"/>
        <dbReference type="ChEBI" id="CHEBI:229976"/>
    </reaction>
    <physiologicalReaction direction="left-to-right" evidence="1">
        <dbReference type="Rhea" id="RHEA:79556"/>
    </physiologicalReaction>
</comment>
<comment type="subcellular location">
    <subcellularLocation>
        <location evidence="1">Golgi apparatus membrane</location>
        <topology evidence="1">Multi-pass membrane protein</topology>
    </subcellularLocation>
</comment>
<comment type="similarity">
    <text evidence="7">Belongs to the PC-esterase family. CASD1 subfamily.</text>
</comment>
<comment type="sequence caution" evidence="7">
    <conflict type="miscellaneous discrepancy">
        <sequence resource="EMBL-CDS" id="AAH97133"/>
    </conflict>
    <text>Contaminating sequence. Potential poly-A sequence.</text>
</comment>
<comment type="sequence caution" evidence="7">
    <conflict type="miscellaneous discrepancy">
        <sequence resource="EMBL-CDS" id="AAI16485"/>
    </conflict>
    <text>Contaminating sequence at C-terminus.</text>
</comment>
<comment type="sequence caution" evidence="7">
    <conflict type="erroneous gene model prediction">
        <sequence resource="EMBL-CDS" id="CAK05066"/>
    </conflict>
</comment>
<proteinExistence type="evidence at transcript level"/>